<accession>Q5USV7</accession>
<keyword id="KW-0165">Cleavage on pair of basic residues</keyword>
<keyword id="KW-0202">Cytokine</keyword>
<keyword id="KW-1015">Disulfide bond</keyword>
<keyword id="KW-0325">Glycoprotein</keyword>
<keyword id="KW-0339">Growth factor</keyword>
<keyword id="KW-0358">Heparin-binding</keyword>
<keyword id="KW-0964">Secreted</keyword>
<keyword id="KW-0732">Signal</keyword>
<gene>
    <name type="primary">MSTN</name>
    <name type="synonym">GDF8</name>
</gene>
<dbReference type="EMBL" id="AY629307">
    <property type="protein sequence ID" value="AAT40571.1"/>
    <property type="molecule type" value="mRNA"/>
</dbReference>
<dbReference type="SMR" id="Q5USV7"/>
<dbReference type="GlyCosmos" id="Q5USV7">
    <property type="glycosylation" value="2 sites, No reported glycans"/>
</dbReference>
<dbReference type="GO" id="GO:0005615">
    <property type="term" value="C:extracellular space"/>
    <property type="evidence" value="ECO:0007669"/>
    <property type="project" value="UniProtKB-KW"/>
</dbReference>
<dbReference type="GO" id="GO:0005125">
    <property type="term" value="F:cytokine activity"/>
    <property type="evidence" value="ECO:0007669"/>
    <property type="project" value="UniProtKB-KW"/>
</dbReference>
<dbReference type="GO" id="GO:0008083">
    <property type="term" value="F:growth factor activity"/>
    <property type="evidence" value="ECO:0007669"/>
    <property type="project" value="UniProtKB-KW"/>
</dbReference>
<dbReference type="GO" id="GO:0008201">
    <property type="term" value="F:heparin binding"/>
    <property type="evidence" value="ECO:0007669"/>
    <property type="project" value="UniProtKB-KW"/>
</dbReference>
<dbReference type="GO" id="GO:0042802">
    <property type="term" value="F:identical protein binding"/>
    <property type="evidence" value="ECO:0000250"/>
    <property type="project" value="UniProtKB"/>
</dbReference>
<dbReference type="GO" id="GO:0014839">
    <property type="term" value="P:myoblast migration involved in skeletal muscle regeneration"/>
    <property type="evidence" value="ECO:0000250"/>
    <property type="project" value="UniProtKB"/>
</dbReference>
<dbReference type="GO" id="GO:0010592">
    <property type="term" value="P:positive regulation of lamellipodium assembly"/>
    <property type="evidence" value="ECO:0000250"/>
    <property type="project" value="UniProtKB"/>
</dbReference>
<dbReference type="GO" id="GO:0010759">
    <property type="term" value="P:positive regulation of macrophage chemotaxis"/>
    <property type="evidence" value="ECO:0000250"/>
    <property type="project" value="UniProtKB"/>
</dbReference>
<dbReference type="CDD" id="cd19388">
    <property type="entry name" value="TGF_beta_GDF8"/>
    <property type="match status" value="1"/>
</dbReference>
<dbReference type="FunFam" id="2.60.120.970:FF:000001">
    <property type="entry name" value="Growth/differentiation factor 8"/>
    <property type="match status" value="1"/>
</dbReference>
<dbReference type="FunFam" id="2.10.90.10:FF:000006">
    <property type="entry name" value="growth/differentiation factor 8"/>
    <property type="match status" value="1"/>
</dbReference>
<dbReference type="Gene3D" id="2.60.120.970">
    <property type="match status" value="1"/>
</dbReference>
<dbReference type="Gene3D" id="2.10.90.10">
    <property type="entry name" value="Cystine-knot cytokines"/>
    <property type="match status" value="1"/>
</dbReference>
<dbReference type="InterPro" id="IPR029034">
    <property type="entry name" value="Cystine-knot_cytokine"/>
</dbReference>
<dbReference type="InterPro" id="IPR001839">
    <property type="entry name" value="TGF-b_C"/>
</dbReference>
<dbReference type="InterPro" id="IPR001111">
    <property type="entry name" value="TGF-b_propeptide"/>
</dbReference>
<dbReference type="InterPro" id="IPR015615">
    <property type="entry name" value="TGF-beta-rel"/>
</dbReference>
<dbReference type="InterPro" id="IPR017948">
    <property type="entry name" value="TGFb_CS"/>
</dbReference>
<dbReference type="PANTHER" id="PTHR11848:SF150">
    <property type="entry name" value="GROWTH_DIFFERENTIATION FACTOR 8"/>
    <property type="match status" value="1"/>
</dbReference>
<dbReference type="PANTHER" id="PTHR11848">
    <property type="entry name" value="TGF-BETA FAMILY"/>
    <property type="match status" value="1"/>
</dbReference>
<dbReference type="Pfam" id="PF00019">
    <property type="entry name" value="TGF_beta"/>
    <property type="match status" value="1"/>
</dbReference>
<dbReference type="Pfam" id="PF00688">
    <property type="entry name" value="TGFb_propeptide"/>
    <property type="match status" value="1"/>
</dbReference>
<dbReference type="SMART" id="SM00204">
    <property type="entry name" value="TGFB"/>
    <property type="match status" value="1"/>
</dbReference>
<dbReference type="SUPFAM" id="SSF57501">
    <property type="entry name" value="Cystine-knot cytokines"/>
    <property type="match status" value="1"/>
</dbReference>
<dbReference type="PROSITE" id="PS00250">
    <property type="entry name" value="TGF_BETA_1"/>
    <property type="match status" value="1"/>
</dbReference>
<dbReference type="PROSITE" id="PS51362">
    <property type="entry name" value="TGF_BETA_2"/>
    <property type="match status" value="1"/>
</dbReference>
<comment type="function">
    <text evidence="1">Acts specifically as a negative regulator of skeletal muscle growth.</text>
</comment>
<comment type="subunit">
    <text evidence="1">Homodimer; disulfide-linked. Interacts with WFIKKN2, leading to inhibit its activity. Interacts with FSTL3.</text>
</comment>
<comment type="subcellular location">
    <subcellularLocation>
        <location evidence="1">Secreted</location>
    </subcellularLocation>
</comment>
<comment type="PTM">
    <text evidence="1">Synthesized as large precursor molecule that undergoes proteolytic cleavage to generate an N-terminal propeptide and a disulfide linked C-terminal dimer, which is the biologically active molecule. The circulating form consists of a latent complex of the C-terminal dimer and other proteins, including its propeptide, which maintain the C-terminal dimer in a latent, inactive state. Ligand activation requires additional cleavage of the prodomain by a tolloid-like metalloproteinase.</text>
</comment>
<comment type="similarity">
    <text evidence="4">Belongs to the TGF-beta family.</text>
</comment>
<proteinExistence type="evidence at transcript level"/>
<sequence length="375" mass="42857">MQKLQIFVYIYLFVLIVAGPVDLNENSEQKEYVEKEGLCNACLWRQNNKSSRLEAIKIQILSKLRLETAPNISKDAIRQLLPKAPPLRELIDQYDVQRDDSSDGSLEDDDYHATTETVITMPTESDLLAEVEEKPKCCFFKFSSKIQYNKVVKAQLWIYLRPVKTPTTVFVQILRLIKPMKDGTRYTGIRSLKLDMNPGTGIWQSIDVKTVLQNWLKQPESNLGIEIKALDENGHNLAVTFPEPGEEGLNPFLEVKVTDTPKRSRRDFGLDCDEHSTESRCCRYPLTVDFEAFGWDWIIAPKRYKANYCSGECEFVFLQKYPHTHLVHQANPRGSAGPCCTPTKMSPINMLYFNGKEQIIYGKIPGMVVDRCGCS</sequence>
<organism>
    <name type="scientific">Aepyceros melampus</name>
    <name type="common">Impala</name>
    <dbReference type="NCBI Taxonomy" id="9897"/>
    <lineage>
        <taxon>Eukaryota</taxon>
        <taxon>Metazoa</taxon>
        <taxon>Chordata</taxon>
        <taxon>Craniata</taxon>
        <taxon>Vertebrata</taxon>
        <taxon>Euteleostomi</taxon>
        <taxon>Mammalia</taxon>
        <taxon>Eutheria</taxon>
        <taxon>Laurasiatheria</taxon>
        <taxon>Artiodactyla</taxon>
        <taxon>Ruminantia</taxon>
        <taxon>Pecora</taxon>
        <taxon>Bovidae</taxon>
        <taxon>Aepycerotinae</taxon>
        <taxon>Aepyceros</taxon>
    </lineage>
</organism>
<evidence type="ECO:0000250" key="1">
    <source>
        <dbReference type="UniProtKB" id="O08689"/>
    </source>
</evidence>
<evidence type="ECO:0000250" key="2">
    <source>
        <dbReference type="UniProtKB" id="O14793"/>
    </source>
</evidence>
<evidence type="ECO:0000255" key="3"/>
<evidence type="ECO:0000305" key="4"/>
<protein>
    <recommendedName>
        <fullName>Growth/differentiation factor 8</fullName>
        <shortName>GDF-8</shortName>
    </recommendedName>
    <alternativeName>
        <fullName>Myostatin</fullName>
    </alternativeName>
</protein>
<feature type="signal peptide" evidence="3">
    <location>
        <begin position="1"/>
        <end position="18"/>
    </location>
</feature>
<feature type="propeptide" id="PRO_0000033926" evidence="3">
    <location>
        <begin position="19"/>
        <end position="266"/>
    </location>
</feature>
<feature type="chain" id="PRO_0000033927" description="Growth/differentiation factor 8">
    <location>
        <begin position="267"/>
        <end position="375"/>
    </location>
</feature>
<feature type="site" description="Cleavage" evidence="1">
    <location>
        <begin position="98"/>
        <end position="99"/>
    </location>
</feature>
<feature type="glycosylation site" description="N-linked (GlcNAc...) asparagine" evidence="3">
    <location>
        <position position="48"/>
    </location>
</feature>
<feature type="glycosylation site" description="N-linked (GlcNAc...) asparagine" evidence="3">
    <location>
        <position position="71"/>
    </location>
</feature>
<feature type="disulfide bond" evidence="2">
    <location>
        <begin position="272"/>
        <end position="282"/>
    </location>
</feature>
<feature type="disulfide bond" evidence="2">
    <location>
        <begin position="281"/>
        <end position="340"/>
    </location>
</feature>
<feature type="disulfide bond" evidence="2">
    <location>
        <begin position="309"/>
        <end position="372"/>
    </location>
</feature>
<feature type="disulfide bond" evidence="2">
    <location>
        <begin position="313"/>
        <end position="374"/>
    </location>
</feature>
<feature type="disulfide bond" description="Interchain" evidence="2">
    <location>
        <position position="339"/>
    </location>
</feature>
<reference key="1">
    <citation type="journal article" date="2004" name="Mol. Phylogenet. Evol.">
        <title>Myostatin rapid sequence evolution in ruminants predates domestication.</title>
        <authorList>
            <person name="Tellgren S."/>
            <person name="Berglund A.C."/>
            <person name="Savolainen P."/>
            <person name="Janis C.M."/>
            <person name="Liberles D.A."/>
        </authorList>
    </citation>
    <scope>NUCLEOTIDE SEQUENCE [MRNA]</scope>
</reference>
<name>GDF8_AEPME</name>